<feature type="chain" id="PRO_0000355319" description="D-tagatose-1,6-bisphosphate aldolase subunit KbaY">
    <location>
        <begin position="1"/>
        <end position="292"/>
    </location>
</feature>
<feature type="active site" description="Proton donor" evidence="1">
    <location>
        <position position="82"/>
    </location>
</feature>
<feature type="binding site" evidence="1">
    <location>
        <position position="83"/>
    </location>
    <ligand>
        <name>Zn(2+)</name>
        <dbReference type="ChEBI" id="CHEBI:29105"/>
        <note>catalytic</note>
    </ligand>
</feature>
<feature type="binding site" evidence="1">
    <location>
        <position position="180"/>
    </location>
    <ligand>
        <name>Zn(2+)</name>
        <dbReference type="ChEBI" id="CHEBI:29105"/>
        <note>catalytic</note>
    </ligand>
</feature>
<feature type="binding site" evidence="1">
    <location>
        <position position="181"/>
    </location>
    <ligand>
        <name>dihydroxyacetone phosphate</name>
        <dbReference type="ChEBI" id="CHEBI:57642"/>
    </ligand>
</feature>
<feature type="binding site" evidence="1">
    <location>
        <position position="208"/>
    </location>
    <ligand>
        <name>Zn(2+)</name>
        <dbReference type="ChEBI" id="CHEBI:29105"/>
        <note>catalytic</note>
    </ligand>
</feature>
<feature type="binding site" evidence="1">
    <location>
        <begin position="209"/>
        <end position="211"/>
    </location>
    <ligand>
        <name>dihydroxyacetone phosphate</name>
        <dbReference type="ChEBI" id="CHEBI:57642"/>
    </ligand>
</feature>
<feature type="binding site" evidence="1">
    <location>
        <begin position="230"/>
        <end position="233"/>
    </location>
    <ligand>
        <name>dihydroxyacetone phosphate</name>
        <dbReference type="ChEBI" id="CHEBI:57642"/>
    </ligand>
</feature>
<name>KBAY_ENT38</name>
<gene>
    <name evidence="1" type="primary">kbaY</name>
    <name type="ordered locus">Ent638_3578</name>
</gene>
<dbReference type="EC" id="4.1.2.40" evidence="1"/>
<dbReference type="EMBL" id="CP000653">
    <property type="protein sequence ID" value="ABP62236.1"/>
    <property type="molecule type" value="Genomic_DNA"/>
</dbReference>
<dbReference type="RefSeq" id="WP_015960562.1">
    <property type="nucleotide sequence ID" value="NC_009436.1"/>
</dbReference>
<dbReference type="SMR" id="A4WEV6"/>
<dbReference type="STRING" id="399742.Ent638_3578"/>
<dbReference type="KEGG" id="ent:Ent638_3578"/>
<dbReference type="eggNOG" id="COG0191">
    <property type="taxonomic scope" value="Bacteria"/>
</dbReference>
<dbReference type="HOGENOM" id="CLU_040088_0_1_6"/>
<dbReference type="OrthoDB" id="9803995at2"/>
<dbReference type="UniPathway" id="UPA00704">
    <property type="reaction ID" value="UER00716"/>
</dbReference>
<dbReference type="Proteomes" id="UP000000230">
    <property type="component" value="Chromosome"/>
</dbReference>
<dbReference type="GO" id="GO:0005829">
    <property type="term" value="C:cytosol"/>
    <property type="evidence" value="ECO:0007669"/>
    <property type="project" value="TreeGrafter"/>
</dbReference>
<dbReference type="GO" id="GO:0009025">
    <property type="term" value="F:tagatose-bisphosphate aldolase activity"/>
    <property type="evidence" value="ECO:0007669"/>
    <property type="project" value="UniProtKB-UniRule"/>
</dbReference>
<dbReference type="GO" id="GO:0008270">
    <property type="term" value="F:zinc ion binding"/>
    <property type="evidence" value="ECO:0007669"/>
    <property type="project" value="UniProtKB-UniRule"/>
</dbReference>
<dbReference type="GO" id="GO:0005975">
    <property type="term" value="P:carbohydrate metabolic process"/>
    <property type="evidence" value="ECO:0007669"/>
    <property type="project" value="InterPro"/>
</dbReference>
<dbReference type="GO" id="GO:2001059">
    <property type="term" value="P:D-tagatose 6-phosphate catabolic process"/>
    <property type="evidence" value="ECO:0007669"/>
    <property type="project" value="UniProtKB-UniRule"/>
</dbReference>
<dbReference type="FunFam" id="3.20.20.70:FF:000043">
    <property type="entry name" value="D-tagatose-1,6-bisphosphate aldolase subunit GatY"/>
    <property type="match status" value="1"/>
</dbReference>
<dbReference type="Gene3D" id="3.20.20.70">
    <property type="entry name" value="Aldolase class I"/>
    <property type="match status" value="1"/>
</dbReference>
<dbReference type="HAMAP" id="MF_01293">
    <property type="entry name" value="TagBP_aldolase_KbaY"/>
    <property type="match status" value="1"/>
</dbReference>
<dbReference type="InterPro" id="IPR013785">
    <property type="entry name" value="Aldolase_TIM"/>
</dbReference>
<dbReference type="InterPro" id="IPR050246">
    <property type="entry name" value="Class_II_FBP_aldolase"/>
</dbReference>
<dbReference type="InterPro" id="IPR000771">
    <property type="entry name" value="FBA_II"/>
</dbReference>
<dbReference type="InterPro" id="IPR023788">
    <property type="entry name" value="TagBP_ald_KbaY"/>
</dbReference>
<dbReference type="InterPro" id="IPR011288">
    <property type="entry name" value="TagBP_ald_KbaY/GatY"/>
</dbReference>
<dbReference type="NCBIfam" id="TIGR00167">
    <property type="entry name" value="cbbA"/>
    <property type="match status" value="1"/>
</dbReference>
<dbReference type="NCBIfam" id="NF006626">
    <property type="entry name" value="PRK09195.1"/>
    <property type="match status" value="1"/>
</dbReference>
<dbReference type="NCBIfam" id="NF009374">
    <property type="entry name" value="PRK12737.1"/>
    <property type="match status" value="1"/>
</dbReference>
<dbReference type="NCBIfam" id="NF009375">
    <property type="entry name" value="PRK12738.1"/>
    <property type="match status" value="1"/>
</dbReference>
<dbReference type="NCBIfam" id="TIGR01858">
    <property type="entry name" value="tag_bisphos_ald"/>
    <property type="match status" value="1"/>
</dbReference>
<dbReference type="PANTHER" id="PTHR30304">
    <property type="entry name" value="D-TAGATOSE-1,6-BISPHOSPHATE ALDOLASE"/>
    <property type="match status" value="1"/>
</dbReference>
<dbReference type="PANTHER" id="PTHR30304:SF0">
    <property type="entry name" value="D-TAGATOSE-1,6-BISPHOSPHATE ALDOLASE SUBUNIT GATY-RELATED"/>
    <property type="match status" value="1"/>
</dbReference>
<dbReference type="Pfam" id="PF01116">
    <property type="entry name" value="F_bP_aldolase"/>
    <property type="match status" value="1"/>
</dbReference>
<dbReference type="PIRSF" id="PIRSF001359">
    <property type="entry name" value="F_bP_aldolase_II"/>
    <property type="match status" value="1"/>
</dbReference>
<dbReference type="SUPFAM" id="SSF51569">
    <property type="entry name" value="Aldolase"/>
    <property type="match status" value="1"/>
</dbReference>
<dbReference type="PROSITE" id="PS00602">
    <property type="entry name" value="ALDOLASE_CLASS_II_1"/>
    <property type="match status" value="1"/>
</dbReference>
<dbReference type="PROSITE" id="PS00806">
    <property type="entry name" value="ALDOLASE_CLASS_II_2"/>
    <property type="match status" value="1"/>
</dbReference>
<keyword id="KW-0456">Lyase</keyword>
<keyword id="KW-0479">Metal-binding</keyword>
<keyword id="KW-0862">Zinc</keyword>
<proteinExistence type="inferred from homology"/>
<organism>
    <name type="scientific">Enterobacter sp. (strain 638)</name>
    <dbReference type="NCBI Taxonomy" id="399742"/>
    <lineage>
        <taxon>Bacteria</taxon>
        <taxon>Pseudomonadati</taxon>
        <taxon>Pseudomonadota</taxon>
        <taxon>Gammaproteobacteria</taxon>
        <taxon>Enterobacterales</taxon>
        <taxon>Enterobacteriaceae</taxon>
        <taxon>Enterobacter</taxon>
    </lineage>
</organism>
<accession>A4WEV6</accession>
<evidence type="ECO:0000255" key="1">
    <source>
        <dbReference type="HAMAP-Rule" id="MF_01293"/>
    </source>
</evidence>
<protein>
    <recommendedName>
        <fullName evidence="1">D-tagatose-1,6-bisphosphate aldolase subunit KbaY</fullName>
        <shortName evidence="1">TBPA</shortName>
        <shortName evidence="1">TagBP aldolase</shortName>
        <ecNumber evidence="1">4.1.2.40</ecNumber>
    </recommendedName>
    <alternativeName>
        <fullName evidence="1">D-tagatose-bisphosphate aldolase class II</fullName>
    </alternativeName>
    <alternativeName>
        <fullName evidence="1">Ketose 1,6-bisphosphate aldolase class II</fullName>
    </alternativeName>
    <alternativeName>
        <fullName evidence="1">Tagatose-bisphosphate aldolase</fullName>
    </alternativeName>
</protein>
<comment type="function">
    <text evidence="1">Catalytic subunit of the tagatose-1,6-bisphosphate aldolase KbaYZ, which catalyzes the reversible aldol condensation of dihydroxyacetone phosphate (DHAP or glycerone-phosphate) with glyceraldehyde 3-phosphate (G3P) to produce tagatose 1,6-bisphosphate (TBP). Requires KbaZ subunit for full activity and stability.</text>
</comment>
<comment type="catalytic activity">
    <reaction evidence="1">
        <text>D-tagatofuranose 1,6-bisphosphate = D-glyceraldehyde 3-phosphate + dihydroxyacetone phosphate</text>
        <dbReference type="Rhea" id="RHEA:22948"/>
        <dbReference type="ChEBI" id="CHEBI:57642"/>
        <dbReference type="ChEBI" id="CHEBI:58694"/>
        <dbReference type="ChEBI" id="CHEBI:59776"/>
        <dbReference type="EC" id="4.1.2.40"/>
    </reaction>
</comment>
<comment type="cofactor">
    <cofactor evidence="1">
        <name>Zn(2+)</name>
        <dbReference type="ChEBI" id="CHEBI:29105"/>
    </cofactor>
    <text evidence="1">Binds 1 zinc ion per subunit.</text>
</comment>
<comment type="pathway">
    <text evidence="1">Carbohydrate metabolism; D-tagatose 6-phosphate degradation; D-glyceraldehyde 3-phosphate and glycerone phosphate from D-tagatose 6-phosphate: step 2/2.</text>
</comment>
<comment type="subunit">
    <text evidence="1">Homotetramer. Forms a complex with KbaZ.</text>
</comment>
<comment type="similarity">
    <text evidence="1">Belongs to the class II fructose-bisphosphate aldolase family. TagBP aldolase KbaY subfamily.</text>
</comment>
<reference key="1">
    <citation type="journal article" date="2010" name="PLoS Genet.">
        <title>Genome sequence of the plant growth promoting endophytic bacterium Enterobacter sp. 638.</title>
        <authorList>
            <person name="Taghavi S."/>
            <person name="van der Lelie D."/>
            <person name="Hoffman A."/>
            <person name="Zhang Y.B."/>
            <person name="Walla M.D."/>
            <person name="Vangronsveld J."/>
            <person name="Newman L."/>
            <person name="Monchy S."/>
        </authorList>
    </citation>
    <scope>NUCLEOTIDE SEQUENCE [LARGE SCALE GENOMIC DNA]</scope>
    <source>
        <strain>638</strain>
    </source>
</reference>
<sequence length="292" mass="32127">MSIISTKYLLQDAQAKGYAVPAFNIHNAETIQAILEVCSEMRSPVILAGTPGTFKHIALEEIYALCSAYSISYDMPLALHLDHHESLDDIRRKVNAGVRSAMIDGSHFPFEQNVTLVKSVVDFCHLNDCSVEAELGRLGGMEDDMSVDAESAFLTDPQEAKRFVELTGVDSLAVAIGTAHGLYTKRPKIDFQRLAEIRDVVDIPLVLHGASDVPDEFVRRTIELGVCKVNVATELKIAFSAAVKEWFNENPQGNDPRFYMRVGMDAMKEVVKNKINVCGSANKLVLDSAVVL</sequence>